<dbReference type="EMBL" id="S83347">
    <property type="protein sequence ID" value="AAB50785.1"/>
    <property type="molecule type" value="mRNA"/>
</dbReference>
<dbReference type="RefSeq" id="XP_017920784.1">
    <molecule id="O02828-1"/>
    <property type="nucleotide sequence ID" value="XM_018065295.1"/>
</dbReference>
<dbReference type="RefSeq" id="XP_017920788.1">
    <molecule id="O02828-2"/>
    <property type="nucleotide sequence ID" value="XM_018065299.1"/>
</dbReference>
<dbReference type="BMRB" id="O02828"/>
<dbReference type="SMR" id="O02828"/>
<dbReference type="Ensembl" id="ENSCHIT00000040079.1">
    <molecule id="O02828-1"/>
    <property type="protein sequence ID" value="ENSCHIP00000032204.1"/>
    <property type="gene ID" value="ENSCHIG00000026221.1"/>
</dbReference>
<dbReference type="GeneID" id="100860820"/>
<dbReference type="KEGG" id="chx:100860820"/>
<dbReference type="CTD" id="4137"/>
<dbReference type="GeneTree" id="ENSGT00940000155494"/>
<dbReference type="OrthoDB" id="9378527at2759"/>
<dbReference type="Proteomes" id="UP000291000">
    <property type="component" value="Chromosome 19"/>
</dbReference>
<dbReference type="Proteomes" id="UP000694566">
    <property type="component" value="Unplaced"/>
</dbReference>
<dbReference type="Bgee" id="ENSCHIG00000026221">
    <property type="expression patterns" value="Expressed in frontal cortex and 16 other cell types or tissues"/>
</dbReference>
<dbReference type="GO" id="GO:0030424">
    <property type="term" value="C:axon"/>
    <property type="evidence" value="ECO:0007669"/>
    <property type="project" value="UniProtKB-SubCell"/>
</dbReference>
<dbReference type="GO" id="GO:0005737">
    <property type="term" value="C:cytoplasm"/>
    <property type="evidence" value="ECO:0000250"/>
    <property type="project" value="UniProtKB"/>
</dbReference>
<dbReference type="GO" id="GO:0005829">
    <property type="term" value="C:cytosol"/>
    <property type="evidence" value="ECO:0007669"/>
    <property type="project" value="UniProtKB-SubCell"/>
</dbReference>
<dbReference type="GO" id="GO:0030425">
    <property type="term" value="C:dendrite"/>
    <property type="evidence" value="ECO:0000250"/>
    <property type="project" value="UniProtKB"/>
</dbReference>
<dbReference type="GO" id="GO:0005874">
    <property type="term" value="C:microtubule"/>
    <property type="evidence" value="ECO:0007669"/>
    <property type="project" value="UniProtKB-KW"/>
</dbReference>
<dbReference type="GO" id="GO:0005886">
    <property type="term" value="C:plasma membrane"/>
    <property type="evidence" value="ECO:0007669"/>
    <property type="project" value="UniProtKB-SubCell"/>
</dbReference>
<dbReference type="GO" id="GO:0008017">
    <property type="term" value="F:microtubule binding"/>
    <property type="evidence" value="ECO:0007669"/>
    <property type="project" value="InterPro"/>
</dbReference>
<dbReference type="GO" id="GO:0000226">
    <property type="term" value="P:microtubule cytoskeleton organization"/>
    <property type="evidence" value="ECO:0007669"/>
    <property type="project" value="TreeGrafter"/>
</dbReference>
<dbReference type="GO" id="GO:0031175">
    <property type="term" value="P:neuron projection development"/>
    <property type="evidence" value="ECO:0007669"/>
    <property type="project" value="TreeGrafter"/>
</dbReference>
<dbReference type="InterPro" id="IPR027324">
    <property type="entry name" value="MAP2/MAP4/Tau"/>
</dbReference>
<dbReference type="InterPro" id="IPR001084">
    <property type="entry name" value="MAP_tubulin-bd_rpt"/>
</dbReference>
<dbReference type="InterPro" id="IPR002955">
    <property type="entry name" value="Tau"/>
</dbReference>
<dbReference type="PANTHER" id="PTHR11501">
    <property type="entry name" value="MICROTUBULE-ASSOCIATED PROTEIN"/>
    <property type="match status" value="1"/>
</dbReference>
<dbReference type="PANTHER" id="PTHR11501:SF14">
    <property type="entry name" value="MICROTUBULE-ASSOCIATED PROTEIN TAU"/>
    <property type="match status" value="1"/>
</dbReference>
<dbReference type="Pfam" id="PF00418">
    <property type="entry name" value="Tubulin-binding"/>
    <property type="match status" value="4"/>
</dbReference>
<dbReference type="PRINTS" id="PR01261">
    <property type="entry name" value="TAUPROTEIN"/>
</dbReference>
<dbReference type="PROSITE" id="PS00229">
    <property type="entry name" value="TAU_MAP_1"/>
    <property type="match status" value="4"/>
</dbReference>
<dbReference type="PROSITE" id="PS51491">
    <property type="entry name" value="TAU_MAP_2"/>
    <property type="match status" value="4"/>
</dbReference>
<name>TAU_CAPHI</name>
<gene>
    <name type="primary">MAPT</name>
    <name type="synonym">TAU</name>
</gene>
<accession>O02828</accession>
<feature type="initiator methionine" description="Removed" evidence="2">
    <location>
        <position position="1"/>
    </location>
</feature>
<feature type="chain" id="PRO_0000072737" description="Microtubule-associated protein tau">
    <location>
        <begin position="2"/>
        <end position="403"/>
    </location>
</feature>
<feature type="repeat" description="Tau/MAP 1" evidence="5">
    <location>
        <begin position="206"/>
        <end position="236"/>
    </location>
</feature>
<feature type="repeat" description="Tau/MAP 2" evidence="5">
    <location>
        <begin position="237"/>
        <end position="267"/>
    </location>
</feature>
<feature type="repeat" description="Tau/MAP 3" evidence="5">
    <location>
        <begin position="268"/>
        <end position="298"/>
    </location>
</feature>
<feature type="repeat" description="Tau/MAP 4" evidence="5">
    <location>
        <begin position="299"/>
        <end position="330"/>
    </location>
</feature>
<feature type="region of interest" description="Disordered" evidence="6">
    <location>
        <begin position="1"/>
        <end position="219"/>
    </location>
</feature>
<feature type="region of interest" description="Disordered" evidence="6">
    <location>
        <begin position="360"/>
        <end position="379"/>
    </location>
</feature>
<feature type="compositionally biased region" description="Basic and acidic residues" evidence="6">
    <location>
        <begin position="1"/>
        <end position="32"/>
    </location>
</feature>
<feature type="compositionally biased region" description="Polar residues" evidence="6">
    <location>
        <begin position="50"/>
        <end position="60"/>
    </location>
</feature>
<feature type="compositionally biased region" description="Basic and acidic residues" evidence="6">
    <location>
        <begin position="90"/>
        <end position="106"/>
    </location>
</feature>
<feature type="compositionally biased region" description="Low complexity" evidence="6">
    <location>
        <begin position="136"/>
        <end position="147"/>
    </location>
</feature>
<feature type="compositionally biased region" description="Low complexity" evidence="6">
    <location>
        <begin position="156"/>
        <end position="176"/>
    </location>
</feature>
<feature type="compositionally biased region" description="Polar residues" evidence="6">
    <location>
        <begin position="363"/>
        <end position="378"/>
    </location>
</feature>
<feature type="modified residue" description="N-acetylalanine" evidence="2">
    <location>
        <position position="2"/>
    </location>
</feature>
<feature type="modified residue" description="Phosphotyrosine" evidence="3">
    <location>
        <position position="19"/>
    </location>
</feature>
<feature type="modified residue" description="Phosphoserine" evidence="4">
    <location>
        <position position="35"/>
    </location>
</feature>
<feature type="modified residue" description="Phosphoserine" evidence="4">
    <location>
        <position position="50"/>
    </location>
</feature>
<feature type="modified residue" description="Phosphothreonine" evidence="3">
    <location>
        <position position="58"/>
    </location>
</feature>
<feature type="modified residue" description="Phosphothreonine" evidence="4">
    <location>
        <position position="60"/>
    </location>
</feature>
<feature type="modified residue" description="Phosphothreonine" evidence="3">
    <location>
        <position position="71"/>
    </location>
</feature>
<feature type="modified residue" description="Phosphothreonine" evidence="2">
    <location>
        <position position="115"/>
    </location>
</feature>
<feature type="modified residue" description="Omega-N-methylarginine" evidence="3">
    <location>
        <position position="117"/>
    </location>
</feature>
<feature type="modified residue" description="N6,N6-dimethyllysine; alternate" evidence="3">
    <location>
        <position position="125"/>
    </location>
</feature>
<feature type="modified residue" description="N6-acetyllysine; alternate" evidence="3">
    <location>
        <position position="125"/>
    </location>
</feature>
<feature type="modified residue" description="Phosphothreonine" evidence="3">
    <location>
        <position position="131"/>
    </location>
</feature>
<feature type="modified residue" description="Phosphothreonine" evidence="3">
    <location>
        <position position="137"/>
    </location>
</feature>
<feature type="modified residue" description="Phosphothreonine" evidence="3">
    <location>
        <position position="138"/>
    </location>
</feature>
<feature type="modified residue" description="Phosphothreonine" evidence="2">
    <location>
        <position position="143"/>
    </location>
</feature>
<feature type="modified residue" description="Phosphoserine" evidence="3">
    <location>
        <position position="153"/>
    </location>
</feature>
<feature type="modified residue" description="Phosphoserine" evidence="3">
    <location>
        <position position="157"/>
    </location>
</feature>
<feature type="modified residue" description="Phosphotyrosine" evidence="2">
    <location>
        <position position="159"/>
    </location>
</feature>
<feature type="modified residue" description="Phosphoserine" evidence="2">
    <location>
        <position position="160"/>
    </location>
</feature>
<feature type="modified residue" description="Phosphoserine" evidence="2">
    <location>
        <position position="161"/>
    </location>
</feature>
<feature type="modified residue" description="Phosphoserine" evidence="2">
    <location>
        <position position="164"/>
    </location>
</feature>
<feature type="modified residue" description="Phosphothreonine" evidence="2">
    <location>
        <position position="167"/>
    </location>
</feature>
<feature type="modified residue" description="Phosphothreonine" evidence="2">
    <location>
        <position position="174"/>
    </location>
</feature>
<feature type="modified residue" description="Phosphoserine" evidence="2">
    <location>
        <position position="176"/>
    </location>
</feature>
<feature type="modified residue" description="Phosphothreonine" evidence="2">
    <location>
        <position position="179"/>
    </location>
</feature>
<feature type="modified residue" description="N6-acetyllysine" evidence="3">
    <location>
        <position position="187"/>
    </location>
</feature>
<feature type="modified residue" description="Phosphothreonine" evidence="2">
    <location>
        <position position="193"/>
    </location>
</feature>
<feature type="modified residue" description="Phosphoserine" evidence="2">
    <location>
        <position position="197"/>
    </location>
</feature>
<feature type="modified residue" description="Phosphoserine" evidence="2">
    <location>
        <position position="199"/>
    </location>
</feature>
<feature type="modified residue" description="N6-acetyllysine; alternate" evidence="3">
    <location>
        <position position="221"/>
    </location>
</feature>
<feature type="modified residue" description="N6-methyllysine; alternate" evidence="3">
    <location>
        <position position="221"/>
    </location>
</feature>
<feature type="modified residue" description="Phosphoserine" evidence="2">
    <location>
        <position position="224"/>
    </location>
</feature>
<feature type="modified residue" description="N6-acetyllysine; alternate" evidence="3">
    <location>
        <position position="243"/>
    </location>
</feature>
<feature type="modified residue" description="Phosphoserine" evidence="2">
    <location>
        <position position="247"/>
    </location>
</feature>
<feature type="modified residue" description="Phosphoserine" evidence="2">
    <location>
        <position position="251"/>
    </location>
</feature>
<feature type="modified residue" description="N6-acetyllysine" evidence="3">
    <location>
        <position position="252"/>
    </location>
</feature>
<feature type="modified residue" description="Phosphoserine" evidence="2">
    <location>
        <position position="255"/>
    </location>
</feature>
<feature type="modified residue" description="N6-acetyllysine; alternate" evidence="3">
    <location>
        <position position="260"/>
    </location>
</feature>
<feature type="modified residue" description="Phosphoserine" evidence="2">
    <location>
        <position position="267"/>
    </location>
</feature>
<feature type="modified residue" description="N6,N6-dimethyllysine; alternate" evidence="3">
    <location>
        <position position="273"/>
    </location>
</feature>
<feature type="modified residue" description="N6-acetyllysine; alternate" evidence="3">
    <location>
        <position position="273"/>
    </location>
</feature>
<feature type="modified residue" description="N6-acetyllysine; alternate" evidence="3">
    <location>
        <position position="279"/>
    </location>
</feature>
<feature type="modified residue" description="N6-acetyllysine; alternate" evidence="3">
    <location>
        <position position="283"/>
    </location>
</feature>
<feature type="modified residue" description="Phosphoserine" evidence="2">
    <location>
        <position position="286"/>
    </location>
</feature>
<feature type="modified residue" description="N6-acetyllysine; alternate" evidence="3">
    <location>
        <position position="293"/>
    </location>
</feature>
<feature type="modified residue" description="N6-acetyllysine; alternate" evidence="3">
    <location>
        <position position="305"/>
    </location>
</feature>
<feature type="modified residue" description="N6-acetyllysine; alternate" evidence="3">
    <location>
        <position position="309"/>
    </location>
</feature>
<feature type="modified residue" description="Omega-N-methylarginine" evidence="3">
    <location>
        <position position="311"/>
    </location>
</feature>
<feature type="modified residue" description="Phosphoserine" evidence="2">
    <location>
        <position position="314"/>
    </location>
</feature>
<feature type="modified residue" description="Phosphoserine" evidence="2">
    <location>
        <position position="318"/>
    </location>
</feature>
<feature type="modified residue" description="N6-acetyllysine; alternate" evidence="3">
    <location>
        <position position="331"/>
    </location>
</feature>
<feature type="modified residue" description="N6-acetyllysine; alternate" evidence="3">
    <location>
        <position position="347"/>
    </location>
</feature>
<feature type="modified residue" description="Phosphotyrosine" evidence="3">
    <location>
        <position position="356"/>
    </location>
</feature>
<feature type="modified residue" description="Phosphoserine" evidence="2">
    <location>
        <position position="358"/>
    </location>
</feature>
<feature type="modified residue" description="Phosphoserine" evidence="2">
    <location>
        <position position="362"/>
    </location>
</feature>
<feature type="modified residue" description="Phosphothreonine" evidence="3">
    <location>
        <position position="365"/>
    </location>
</feature>
<feature type="modified residue" description="Phosphoserine" evidence="2">
    <location>
        <position position="366"/>
    </location>
</feature>
<feature type="modified residue" description="Phosphoserine" evidence="2">
    <location>
        <position position="371"/>
    </location>
</feature>
<feature type="modified residue" description="Phosphoserine" evidence="2">
    <location>
        <position position="378"/>
    </location>
</feature>
<feature type="modified residue" description="Phosphoserine" evidence="2">
    <location>
        <position position="384"/>
    </location>
</feature>
<feature type="modified residue" description="Phosphothreonine" evidence="2">
    <location>
        <position position="389"/>
    </location>
</feature>
<feature type="disulfide bond" evidence="1">
    <location>
        <begin position="253"/>
        <end position="284"/>
    </location>
</feature>
<feature type="cross-link" description="Glycyl lysine isopeptide (Lys-Gly) (interchain with G-Cter in ubiquitin)" evidence="3">
    <location>
        <position position="33"/>
    </location>
</feature>
<feature type="cross-link" description="Glycyl lysine isopeptide (Lys-Gly) (interchain with G-Cter in ubiquitin)" evidence="2">
    <location>
        <position position="216"/>
    </location>
</feature>
<feature type="cross-link" description="Glycyl lysine isopeptide (Lys-Gly) (interchain with G-Cter in ubiquitin); alternate" evidence="3">
    <location>
        <position position="221"/>
    </location>
</feature>
<feature type="cross-link" description="Glycyl lysine isopeptide (Lys-Gly) (interchain with G-Cter in ubiquitin)" evidence="3">
    <location>
        <position position="229"/>
    </location>
</feature>
<feature type="cross-link" description="Glycyl lysine isopeptide (Lys-Gly) (interchain with G-Cter in ubiquitin); alternate" evidence="3">
    <location>
        <position position="243"/>
    </location>
</feature>
<feature type="cross-link" description="Glycyl lysine isopeptide (Lys-Gly) (interchain with G-Cter in ubiquitin); alternate" evidence="3">
    <location>
        <position position="260"/>
    </location>
</feature>
<feature type="cross-link" description="Glycyl lysine isopeptide (Lys-Gly) (interchain with G-Cter in ubiquitin); alternate" evidence="2">
    <location>
        <position position="273"/>
    </location>
</feature>
<feature type="cross-link" description="Glycyl lysine isopeptide (Lys-Gly) (interchain with G-Cter in ubiquitin); alternate" evidence="3">
    <location>
        <position position="279"/>
    </location>
</feature>
<feature type="cross-link" description="Glycyl lysine isopeptide (Lys-Gly) (interchain with G-Cter in ubiquitin); alternate" evidence="3">
    <location>
        <position position="283"/>
    </location>
</feature>
<feature type="cross-link" description="Glycyl lysine isopeptide (Lys-Gly) (interchain with G-Cter in ubiquitin); alternate" evidence="3">
    <location>
        <position position="293"/>
    </location>
</feature>
<feature type="cross-link" description="Glycyl lysine isopeptide (Lys-Gly) (interchain with G-Cter in ubiquitin); alternate" evidence="3">
    <location>
        <position position="305"/>
    </location>
</feature>
<feature type="cross-link" description="Glycyl lysine isopeptide (Lys-Gly) (interchain with G-Cter in ubiquitin); alternate" evidence="3">
    <location>
        <position position="309"/>
    </location>
</feature>
<feature type="cross-link" description="Glycyl lysine isopeptide (Lys-Gly) (interchain with G-Cter in ubiquitin)" evidence="2">
    <location>
        <position position="315"/>
    </location>
</feature>
<feature type="cross-link" description="Glycyl lysine isopeptide (Lys-Gly) (interchain with G-Cter in ubiquitin); alternate" evidence="3">
    <location>
        <position position="331"/>
    </location>
</feature>
<feature type="cross-link" description="Glycyl lysine isopeptide (Lys-Gly) (interchain with G-Cter in ubiquitin)" evidence="3">
    <location>
        <position position="337"/>
    </location>
</feature>
<feature type="cross-link" description="Glycyl lysine isopeptide (Lys-Gly) (interchain with G-Cter in ubiquitin); alternate" evidence="3">
    <location>
        <position position="347"/>
    </location>
</feature>
<feature type="splice variant" id="VSP_003173" description="In isoform Tau-B." evidence="7">
    <location>
        <begin position="34"/>
        <end position="62"/>
    </location>
</feature>
<feature type="splice variant" id="VSP_003174" description="In isoform Tau-B." evidence="7">
    <location>
        <begin position="237"/>
        <end position="267"/>
    </location>
</feature>
<organism>
    <name type="scientific">Capra hircus</name>
    <name type="common">Goat</name>
    <dbReference type="NCBI Taxonomy" id="9925"/>
    <lineage>
        <taxon>Eukaryota</taxon>
        <taxon>Metazoa</taxon>
        <taxon>Chordata</taxon>
        <taxon>Craniata</taxon>
        <taxon>Vertebrata</taxon>
        <taxon>Euteleostomi</taxon>
        <taxon>Mammalia</taxon>
        <taxon>Eutheria</taxon>
        <taxon>Laurasiatheria</taxon>
        <taxon>Artiodactyla</taxon>
        <taxon>Ruminantia</taxon>
        <taxon>Pecora</taxon>
        <taxon>Bovidae</taxon>
        <taxon>Caprinae</taxon>
        <taxon>Capra</taxon>
    </lineage>
</organism>
<reference key="1">
    <citation type="journal article" date="1996" name="J. Neurochem.">
        <title>Molecular evolution of tau protein: implications for Alzheimer's disease.</title>
        <authorList>
            <person name="Nelson P.T."/>
            <person name="Stefansson K."/>
            <person name="Gulcher J."/>
            <person name="Saper C.B."/>
        </authorList>
    </citation>
    <scope>NUCLEOTIDE SEQUENCE [MRNA] (ISOFORMS TAU-A AND TAU-B)</scope>
    <source>
        <tissue>Brain cortex</tissue>
    </source>
</reference>
<comment type="function">
    <text>Promotes microtubule assembly and stability, and might be involved in the establishment and maintenance of neuronal polarity. The C-terminus binds axonal microtubules while the N-terminus binds neural plasma membrane components, suggesting that tau functions as a linker protein between both. Axonal polarity is predetermined by tau localization (in the neuronal cell) in the domain of the cell body defined by the centrosome. The short isoforms allow plasticity of the cytoskeleton whereas the longer isoforms may preferentially play a role in its stabilization.</text>
</comment>
<comment type="subunit">
    <text evidence="2 3 4">Interacts with MARK1, MARK2, MARK3 and MARK4 (By similarity). Interacts with SQSTM1 when polyubiquitinated (By similarity). Interacts with PSMC2 through SQSTM1 (By similarity). Interacts with FKBP4 (By similarity). Binds to CSNK1D (By similarity). Interacts with SGK1 (By similarity). Interacts with PIN1 (By similarity). Interacts with LRRK2 (By similarity). Interacts with LRP1, leading to endocytosis; this interaction is reduced in the presence of LRPAP1/RAP (By similarity).</text>
</comment>
<comment type="subcellular location">
    <subcellularLocation>
        <location evidence="2">Cytoplasm</location>
        <location evidence="2">Cytosol</location>
    </subcellularLocation>
    <subcellularLocation>
        <location evidence="2">Cell membrane</location>
        <topology evidence="2">Peripheral membrane protein</topology>
        <orientation evidence="2">Cytoplasmic side</orientation>
    </subcellularLocation>
    <subcellularLocation>
        <location evidence="2">Cytoplasm</location>
        <location evidence="2">Cytoskeleton</location>
    </subcellularLocation>
    <subcellularLocation>
        <location evidence="2">Cell projection</location>
        <location evidence="2">Axon</location>
    </subcellularLocation>
    <subcellularLocation>
        <location evidence="2">Cell projection</location>
        <location evidence="2">Dendrite</location>
    </subcellularLocation>
    <text evidence="2">Mostly found in the axons of neurons, in the cytosol and in association with plasma membrane components.</text>
</comment>
<comment type="alternative products">
    <event type="alternative splicing"/>
    <isoform>
        <id>O02828-1</id>
        <name>Tau-A</name>
        <sequence type="displayed"/>
    </isoform>
    <isoform>
        <id>O02828-2</id>
        <name>Tau-B</name>
        <sequence type="described" ref="VSP_003173 VSP_003174"/>
    </isoform>
    <text>Additional isoforms seem to exist. Isoforms differ from each other by the presence or absence of two exons. One of these optional exons contains the additional tau/MAP repeat.</text>
</comment>
<comment type="tissue specificity">
    <text>Expressed in neurons.</text>
</comment>
<comment type="domain">
    <text>The tau/MAP repeat binds to tubulin. Type I isoforms contain 3 repeats while type II isoforms contain 4 repeats.</text>
</comment>
<comment type="PTM">
    <text evidence="1">Polyubiquitinated. Requires functional TRAF6 and may provoke SQSTM1-dependent degradation by the proteasome (By similarity).</text>
</comment>
<comment type="PTM">
    <text evidence="1 2">Phosphorylation at various serine and threonine residues in S-P or T-P motifs by proline-directed protein kinases (PDPK1, CDK1, CDK5, GSK3, MAPK) (a few sites per protein in interphase, more in mitosis), and at serine residues in K-X-G-S motifs by MAP/microtubule affinity-regulating kinase (MARK1, MARK2, MARK3, MARK4), causing detachment from microtubules, and their disassembly (By similarity). Phosphorylation at Ser-224 by BRSK1 and BRSK2 in neurons affects ability to bind microtubules and plays a role in neuron polarization. Phosphorylated by PHK. Dephosphorylation at several serine and threonine residues by the serine/threonine phosphatase PPP5C (By similarity).</text>
</comment>
<protein>
    <recommendedName>
        <fullName>Microtubule-associated protein tau</fullName>
    </recommendedName>
    <alternativeName>
        <fullName>Neurofibrillary tangle protein</fullName>
    </alternativeName>
    <alternativeName>
        <fullName>Paired helical filament-tau</fullName>
        <shortName>PHF-tau</shortName>
    </alternativeName>
</protein>
<proteinExistence type="evidence at transcript level"/>
<evidence type="ECO:0000250" key="1"/>
<evidence type="ECO:0000250" key="2">
    <source>
        <dbReference type="UniProtKB" id="P10636"/>
    </source>
</evidence>
<evidence type="ECO:0000250" key="3">
    <source>
        <dbReference type="UniProtKB" id="P10637"/>
    </source>
</evidence>
<evidence type="ECO:0000250" key="4">
    <source>
        <dbReference type="UniProtKB" id="P19332"/>
    </source>
</evidence>
<evidence type="ECO:0000255" key="5">
    <source>
        <dbReference type="PROSITE-ProRule" id="PRU00824"/>
    </source>
</evidence>
<evidence type="ECO:0000256" key="6">
    <source>
        <dbReference type="SAM" id="MobiDB-lite"/>
    </source>
</evidence>
<evidence type="ECO:0000303" key="7">
    <source>
    </source>
</evidence>
<keyword id="KW-0007">Acetylation</keyword>
<keyword id="KW-0025">Alternative splicing</keyword>
<keyword id="KW-1003">Cell membrane</keyword>
<keyword id="KW-0966">Cell projection</keyword>
<keyword id="KW-0963">Cytoplasm</keyword>
<keyword id="KW-0206">Cytoskeleton</keyword>
<keyword id="KW-1015">Disulfide bond</keyword>
<keyword id="KW-1017">Isopeptide bond</keyword>
<keyword id="KW-0472">Membrane</keyword>
<keyword id="KW-0488">Methylation</keyword>
<keyword id="KW-0493">Microtubule</keyword>
<keyword id="KW-0597">Phosphoprotein</keyword>
<keyword id="KW-1185">Reference proteome</keyword>
<keyword id="KW-0677">Repeat</keyword>
<keyword id="KW-0832">Ubl conjugation</keyword>
<sequence length="403" mass="41848">MAEPRQEFDVMEDHAQGDYTLQDHEGDMEPGLKESPLQTPADDGSEEPGSETSDAKSTPTAEAEEAGIGDTSNLEDQAAGHVTQARMVSKGKDGTGPDDKKAKGADGKPGTKIATPRGAAPPGQKGQANATRIPAKTTPTPKTSPGTGESGKSGDRSGYSSPGSPGTPGSRSRTPSLPTPPTREPKKVAVVRTPPKSPSAAKSRLQAAPGPMPDLKNVKSKIGSTENLKHQPGGGKVQIINKKLDLSNVQSKCGSKDNIKHVPGGGSVQIVYKPVDLSKVTSKCGSLGNIHHKPGGGQVEVKSEKLDFKDRVQSKIGSLDNITHVPGGGNKKIETHKLTFRENAKAKTDHGAEIVYKSPVVSGDTSPRHLSNVSSTGSIDMVDSPQLATLADEVSASLAKQGL</sequence>